<gene>
    <name type="primary">clpB</name>
    <name type="ordered locus">CPn_0144</name>
    <name type="ordered locus">CP_0629</name>
    <name type="ordered locus">CpB0145</name>
</gene>
<feature type="chain" id="PRO_0000191106" description="Chaperone protein ClpB">
    <location>
        <begin position="1"/>
        <end position="866"/>
    </location>
</feature>
<feature type="domain" description="Clp R" evidence="2">
    <location>
        <begin position="1"/>
        <end position="145"/>
    </location>
</feature>
<feature type="region of interest" description="Repeat 1" evidence="2">
    <location>
        <begin position="4"/>
        <end position="69"/>
    </location>
</feature>
<feature type="region of interest" description="Repeat 2" evidence="2">
    <location>
        <begin position="81"/>
        <end position="145"/>
    </location>
</feature>
<feature type="region of interest" description="NBD1" evidence="1">
    <location>
        <begin position="158"/>
        <end position="339"/>
    </location>
</feature>
<feature type="region of interest" description="Linker" evidence="1">
    <location>
        <begin position="340"/>
        <end position="545"/>
    </location>
</feature>
<feature type="region of interest" description="NBD2" evidence="1">
    <location>
        <begin position="555"/>
        <end position="769"/>
    </location>
</feature>
<feature type="region of interest" description="C-terminal" evidence="1">
    <location>
        <begin position="770"/>
        <end position="866"/>
    </location>
</feature>
<feature type="coiled-coil region" evidence="1">
    <location>
        <begin position="390"/>
        <end position="524"/>
    </location>
</feature>
<feature type="binding site" evidence="1">
    <location>
        <begin position="205"/>
        <end position="212"/>
    </location>
    <ligand>
        <name>ATP</name>
        <dbReference type="ChEBI" id="CHEBI:30616"/>
        <label>1</label>
    </ligand>
</feature>
<feature type="binding site" evidence="1">
    <location>
        <begin position="605"/>
        <end position="612"/>
    </location>
    <ligand>
        <name>ATP</name>
        <dbReference type="ChEBI" id="CHEBI:30616"/>
        <label>2</label>
    </ligand>
</feature>
<evidence type="ECO:0000250" key="1"/>
<evidence type="ECO:0000255" key="2">
    <source>
        <dbReference type="PROSITE-ProRule" id="PRU01251"/>
    </source>
</evidence>
<evidence type="ECO:0000305" key="3"/>
<organism>
    <name type="scientific">Chlamydia pneumoniae</name>
    <name type="common">Chlamydophila pneumoniae</name>
    <dbReference type="NCBI Taxonomy" id="83558"/>
    <lineage>
        <taxon>Bacteria</taxon>
        <taxon>Pseudomonadati</taxon>
        <taxon>Chlamydiota</taxon>
        <taxon>Chlamydiia</taxon>
        <taxon>Chlamydiales</taxon>
        <taxon>Chlamydiaceae</taxon>
        <taxon>Chlamydia/Chlamydophila group</taxon>
        <taxon>Chlamydia</taxon>
    </lineage>
</organism>
<dbReference type="EMBL" id="AE001363">
    <property type="protein sequence ID" value="AAD18297.1"/>
    <property type="molecule type" value="Genomic_DNA"/>
</dbReference>
<dbReference type="EMBL" id="AE002161">
    <property type="protein sequence ID" value="AAF38444.1"/>
    <property type="status" value="ALT_INIT"/>
    <property type="molecule type" value="Genomic_DNA"/>
</dbReference>
<dbReference type="EMBL" id="BA000008">
    <property type="protein sequence ID" value="BAA98354.1"/>
    <property type="molecule type" value="Genomic_DNA"/>
</dbReference>
<dbReference type="EMBL" id="AE009440">
    <property type="protein sequence ID" value="AAP98078.1"/>
    <property type="status" value="ALT_INIT"/>
    <property type="molecule type" value="Genomic_DNA"/>
</dbReference>
<dbReference type="PIR" id="E72113">
    <property type="entry name" value="E72113"/>
</dbReference>
<dbReference type="PIR" id="H81556">
    <property type="entry name" value="H81556"/>
</dbReference>
<dbReference type="PIR" id="H86508">
    <property type="entry name" value="H86508"/>
</dbReference>
<dbReference type="RefSeq" id="NP_224352.1">
    <property type="nucleotide sequence ID" value="NC_000922.1"/>
</dbReference>
<dbReference type="RefSeq" id="WP_010882794.1">
    <property type="nucleotide sequence ID" value="NZ_LN847257.1"/>
</dbReference>
<dbReference type="SMR" id="Q7AJA9"/>
<dbReference type="STRING" id="406984.CPK_ORF00656"/>
<dbReference type="GeneID" id="45050189"/>
<dbReference type="KEGG" id="cpa:CP_0629"/>
<dbReference type="KEGG" id="cpj:clpB"/>
<dbReference type="KEGG" id="cpn:CPn_0144"/>
<dbReference type="KEGG" id="cpt:CpB0145"/>
<dbReference type="PATRIC" id="fig|115713.3.peg.162"/>
<dbReference type="eggNOG" id="COG0542">
    <property type="taxonomic scope" value="Bacteria"/>
</dbReference>
<dbReference type="HOGENOM" id="CLU_005070_4_0_0"/>
<dbReference type="OMA" id="GPMDASN"/>
<dbReference type="OrthoDB" id="9803641at2"/>
<dbReference type="Proteomes" id="UP000000583">
    <property type="component" value="Chromosome"/>
</dbReference>
<dbReference type="Proteomes" id="UP000000801">
    <property type="component" value="Chromosome"/>
</dbReference>
<dbReference type="GO" id="GO:0005737">
    <property type="term" value="C:cytoplasm"/>
    <property type="evidence" value="ECO:0007669"/>
    <property type="project" value="UniProtKB-SubCell"/>
</dbReference>
<dbReference type="GO" id="GO:0005524">
    <property type="term" value="F:ATP binding"/>
    <property type="evidence" value="ECO:0007669"/>
    <property type="project" value="UniProtKB-KW"/>
</dbReference>
<dbReference type="GO" id="GO:0016887">
    <property type="term" value="F:ATP hydrolysis activity"/>
    <property type="evidence" value="ECO:0007669"/>
    <property type="project" value="InterPro"/>
</dbReference>
<dbReference type="GO" id="GO:0034605">
    <property type="term" value="P:cellular response to heat"/>
    <property type="evidence" value="ECO:0007669"/>
    <property type="project" value="TreeGrafter"/>
</dbReference>
<dbReference type="CDD" id="cd00009">
    <property type="entry name" value="AAA"/>
    <property type="match status" value="1"/>
</dbReference>
<dbReference type="CDD" id="cd19499">
    <property type="entry name" value="RecA-like_ClpB_Hsp104-like"/>
    <property type="match status" value="1"/>
</dbReference>
<dbReference type="FunFam" id="3.40.50.300:FF:000120">
    <property type="entry name" value="ATP-dependent chaperone ClpB"/>
    <property type="match status" value="1"/>
</dbReference>
<dbReference type="FunFam" id="3.40.50.300:FF:000025">
    <property type="entry name" value="ATP-dependent Clp protease subunit"/>
    <property type="match status" value="1"/>
</dbReference>
<dbReference type="FunFam" id="3.40.50.300:FF:000010">
    <property type="entry name" value="Chaperone clpB 1, putative"/>
    <property type="match status" value="1"/>
</dbReference>
<dbReference type="Gene3D" id="1.10.8.60">
    <property type="match status" value="1"/>
</dbReference>
<dbReference type="Gene3D" id="1.10.1780.10">
    <property type="entry name" value="Clp, N-terminal domain"/>
    <property type="match status" value="1"/>
</dbReference>
<dbReference type="Gene3D" id="3.40.50.300">
    <property type="entry name" value="P-loop containing nucleotide triphosphate hydrolases"/>
    <property type="match status" value="3"/>
</dbReference>
<dbReference type="InterPro" id="IPR003593">
    <property type="entry name" value="AAA+_ATPase"/>
</dbReference>
<dbReference type="InterPro" id="IPR003959">
    <property type="entry name" value="ATPase_AAA_core"/>
</dbReference>
<dbReference type="InterPro" id="IPR019489">
    <property type="entry name" value="Clp_ATPase_C"/>
</dbReference>
<dbReference type="InterPro" id="IPR036628">
    <property type="entry name" value="Clp_N_dom_sf"/>
</dbReference>
<dbReference type="InterPro" id="IPR004176">
    <property type="entry name" value="Clp_R_dom"/>
</dbReference>
<dbReference type="InterPro" id="IPR001270">
    <property type="entry name" value="ClpA/B"/>
</dbReference>
<dbReference type="InterPro" id="IPR018368">
    <property type="entry name" value="ClpA/B_CS1"/>
</dbReference>
<dbReference type="InterPro" id="IPR028299">
    <property type="entry name" value="ClpA/B_CS2"/>
</dbReference>
<dbReference type="InterPro" id="IPR041546">
    <property type="entry name" value="ClpA/ClpB_AAA_lid"/>
</dbReference>
<dbReference type="InterPro" id="IPR050130">
    <property type="entry name" value="ClpA_ClpB"/>
</dbReference>
<dbReference type="InterPro" id="IPR027417">
    <property type="entry name" value="P-loop_NTPase"/>
</dbReference>
<dbReference type="PANTHER" id="PTHR11638">
    <property type="entry name" value="ATP-DEPENDENT CLP PROTEASE"/>
    <property type="match status" value="1"/>
</dbReference>
<dbReference type="PANTHER" id="PTHR11638:SF18">
    <property type="entry name" value="HEAT SHOCK PROTEIN 104"/>
    <property type="match status" value="1"/>
</dbReference>
<dbReference type="Pfam" id="PF00004">
    <property type="entry name" value="AAA"/>
    <property type="match status" value="1"/>
</dbReference>
<dbReference type="Pfam" id="PF07724">
    <property type="entry name" value="AAA_2"/>
    <property type="match status" value="1"/>
</dbReference>
<dbReference type="Pfam" id="PF17871">
    <property type="entry name" value="AAA_lid_9"/>
    <property type="match status" value="1"/>
</dbReference>
<dbReference type="Pfam" id="PF02861">
    <property type="entry name" value="Clp_N"/>
    <property type="match status" value="2"/>
</dbReference>
<dbReference type="Pfam" id="PF10431">
    <property type="entry name" value="ClpB_D2-small"/>
    <property type="match status" value="1"/>
</dbReference>
<dbReference type="PRINTS" id="PR00300">
    <property type="entry name" value="CLPPROTEASEA"/>
</dbReference>
<dbReference type="SMART" id="SM00382">
    <property type="entry name" value="AAA"/>
    <property type="match status" value="2"/>
</dbReference>
<dbReference type="SMART" id="SM01086">
    <property type="entry name" value="ClpB_D2-small"/>
    <property type="match status" value="1"/>
</dbReference>
<dbReference type="SUPFAM" id="SSF81923">
    <property type="entry name" value="Double Clp-N motif"/>
    <property type="match status" value="1"/>
</dbReference>
<dbReference type="SUPFAM" id="SSF52540">
    <property type="entry name" value="P-loop containing nucleoside triphosphate hydrolases"/>
    <property type="match status" value="2"/>
</dbReference>
<dbReference type="PROSITE" id="PS51903">
    <property type="entry name" value="CLP_R"/>
    <property type="match status" value="1"/>
</dbReference>
<dbReference type="PROSITE" id="PS00870">
    <property type="entry name" value="CLPAB_1"/>
    <property type="match status" value="1"/>
</dbReference>
<dbReference type="PROSITE" id="PS00871">
    <property type="entry name" value="CLPAB_2"/>
    <property type="match status" value="1"/>
</dbReference>
<keyword id="KW-0067">ATP-binding</keyword>
<keyword id="KW-0143">Chaperone</keyword>
<keyword id="KW-0175">Coiled coil</keyword>
<keyword id="KW-0963">Cytoplasm</keyword>
<keyword id="KW-0547">Nucleotide-binding</keyword>
<keyword id="KW-0677">Repeat</keyword>
<keyword id="KW-0346">Stress response</keyword>
<protein>
    <recommendedName>
        <fullName>Chaperone protein ClpB</fullName>
    </recommendedName>
</protein>
<name>CLPB_CHLPN</name>
<sequence length="866" mass="96928">MEKFSDAVSEALEKAFELAKSSKHTYVTENHLLLALLENTESLFYLVIKDIHGNPGLLNTAVKDALSREPTVVEGEVDPKPSPGLQTLLRDAKQEAKTLGDEYISGDHLLLAFWSSNKEPFNSWKQTTKVSFKDLKNLITKIRRGNRMDSPSAESNFQGLEKYCKNLTALAREGKLDPVIGRDEEIRRTIQVLSRRTKNNPMLIGEPGVGKTAIAEGLALRLIQGDVPESLKGKQLYVLDMGALIAGAKYRGEFEERLKSVLKDVESGDGEHIIFIDEVHTLVGAGATDGAMDAANLLKPALARGTLHCIGATTLNEYQKYIEKDAALERRFQPIFVTEPSLEDAVFILRGLREKYEIFHGVRITEGALNAAVLLSYRYIPDRFLPDKAIDLIDEAASLIRMQIGSLPLPIDEKERELAALIVKQEAIKREQSPSYQEEADAMQKSIDALREELASLRLGWDEEKKLISGLKEKKNSLESMKFSEEEAERVADYNRVAELRYSLIPQLEEEIKQDEASLNQRDNRLLQEEVDERLIAQVVANWTGIPVQKMLEGEAEKLLILEESLEERVVGQPFAVSAVSDSIRAARVGLNDPQRPLGVFLFLGPTGVGKTELAKALADLLFNKEEAMVRFDMSEYMEKHSISKLIGSSPGYVGYEEGGSLSEALRRRPYSVVLFDEIEKADKEVLNILLQVFDDGILTDGKKRKVNCKNALFIMTSNIGSPELADYCSKKGSELTKEAILSVVSPVLKRYLSPEFMNRIDEILPFVPLTKEDIVKIVGIQMRRIAQRLKARRINLSWDDSVILFLSEQGYDSAFGARPLKRLIQQKVVILLSKALLKGDIKPDTSIELTMAKEVLVFKKVETPS</sequence>
<reference key="1">
    <citation type="journal article" date="1999" name="Nat. Genet.">
        <title>Comparative genomes of Chlamydia pneumoniae and C. trachomatis.</title>
        <authorList>
            <person name="Kalman S."/>
            <person name="Mitchell W.P."/>
            <person name="Marathe R."/>
            <person name="Lammel C.J."/>
            <person name="Fan J."/>
            <person name="Hyman R.W."/>
            <person name="Olinger L."/>
            <person name="Grimwood J."/>
            <person name="Davis R.W."/>
            <person name="Stephens R.S."/>
        </authorList>
    </citation>
    <scope>NUCLEOTIDE SEQUENCE [LARGE SCALE GENOMIC DNA]</scope>
    <source>
        <strain>CWL029</strain>
    </source>
</reference>
<reference key="2">
    <citation type="journal article" date="2000" name="Nucleic Acids Res.">
        <title>Genome sequences of Chlamydia trachomatis MoPn and Chlamydia pneumoniae AR39.</title>
        <authorList>
            <person name="Read T.D."/>
            <person name="Brunham R.C."/>
            <person name="Shen C."/>
            <person name="Gill S.R."/>
            <person name="Heidelberg J.F."/>
            <person name="White O."/>
            <person name="Hickey E.K."/>
            <person name="Peterson J.D."/>
            <person name="Utterback T.R."/>
            <person name="Berry K.J."/>
            <person name="Bass S."/>
            <person name="Linher K.D."/>
            <person name="Weidman J.F."/>
            <person name="Khouri H.M."/>
            <person name="Craven B."/>
            <person name="Bowman C."/>
            <person name="Dodson R.J."/>
            <person name="Gwinn M.L."/>
            <person name="Nelson W.C."/>
            <person name="DeBoy R.T."/>
            <person name="Kolonay J.F."/>
            <person name="McClarty G."/>
            <person name="Salzberg S.L."/>
            <person name="Eisen J.A."/>
            <person name="Fraser C.M."/>
        </authorList>
    </citation>
    <scope>NUCLEOTIDE SEQUENCE [LARGE SCALE GENOMIC DNA]</scope>
    <source>
        <strain>AR39</strain>
    </source>
</reference>
<reference key="3">
    <citation type="journal article" date="2000" name="Nucleic Acids Res.">
        <title>Comparison of whole genome sequences of Chlamydia pneumoniae J138 from Japan and CWL029 from USA.</title>
        <authorList>
            <person name="Shirai M."/>
            <person name="Hirakawa H."/>
            <person name="Kimoto M."/>
            <person name="Tabuchi M."/>
            <person name="Kishi F."/>
            <person name="Ouchi K."/>
            <person name="Shiba T."/>
            <person name="Ishii K."/>
            <person name="Hattori M."/>
            <person name="Kuhara S."/>
            <person name="Nakazawa T."/>
        </authorList>
    </citation>
    <scope>NUCLEOTIDE SEQUENCE [LARGE SCALE GENOMIC DNA]</scope>
    <source>
        <strain>J138</strain>
    </source>
</reference>
<reference key="4">
    <citation type="submission" date="2002-05" db="EMBL/GenBank/DDBJ databases">
        <title>The genome sequence of Chlamydia pneumoniae TW183 and comparison with other Chlamydia strains based on whole genome sequence analysis.</title>
        <authorList>
            <person name="Geng M.M."/>
            <person name="Schuhmacher A."/>
            <person name="Muehldorfer I."/>
            <person name="Bensch K.W."/>
            <person name="Schaefer K.P."/>
            <person name="Schneider S."/>
            <person name="Pohl T."/>
            <person name="Essig A."/>
            <person name="Marre R."/>
            <person name="Melchers K."/>
        </authorList>
    </citation>
    <scope>NUCLEOTIDE SEQUENCE [LARGE SCALE GENOMIC DNA]</scope>
    <source>
        <strain>TW-183</strain>
    </source>
</reference>
<proteinExistence type="inferred from homology"/>
<comment type="function">
    <text evidence="1">Part of a stress-induced multi-chaperone system, it is involved in the recovery of the cell from heat-induced damage, in cooperation with DnaK, DnaJ and GrpE. Acts before DnaK, in the processing of protein aggregates. Protein binding stimulates the ATPase activity; ATP hydrolysis unfolds the denatured protein aggregates, which probably helps expose new hydrophobic binding sites on the surface of ClpB-bound aggregates, contributing to the solubilization and refolding of denatured protein aggregates by DnaK (By similarity).</text>
</comment>
<comment type="subunit">
    <text evidence="1">Homohexamer. The oligomerization is ATP-dependent (By similarity).</text>
</comment>
<comment type="subcellular location">
    <subcellularLocation>
        <location evidence="3">Cytoplasm</location>
    </subcellularLocation>
</comment>
<comment type="domain">
    <text evidence="1">The Clp repeat (R) domain probably functions as a substrate-discriminating domain, recruiting aggregated proteins to the ClpB hexamer and/or stabilizing bound proteins. The NBD2 domain is responsible for oligomerization, whereas the NBD1 domain stabilizes the hexamer probably in an ATP-dependent manner. The movement of the coiled-coil domain is essential for ClpB ability to rescue proteins from an aggregated state, probably by pulling apart large aggregated proteins, which are bound between the coiled-coils motifs of adjacent ClpB subunits in the functional hexamer (By similarity).</text>
</comment>
<comment type="similarity">
    <text evidence="3">Belongs to the ClpA/ClpB family.</text>
</comment>
<comment type="sequence caution" evidence="3">
    <conflict type="erroneous initiation">
        <sequence resource="EMBL-CDS" id="AAF38444"/>
    </conflict>
</comment>
<comment type="sequence caution" evidence="3">
    <conflict type="erroneous initiation">
        <sequence resource="EMBL-CDS" id="AAP98078"/>
    </conflict>
</comment>
<accession>Q7AJA9</accession>
<accession>Q7VQ76</accession>
<accession>Q9K226</accession>
<accession>Q9Z939</accession>